<reference key="1">
    <citation type="journal article" date="2002" name="Nature">
        <title>The genome sequence of Schizosaccharomyces pombe.</title>
        <authorList>
            <person name="Wood V."/>
            <person name="Gwilliam R."/>
            <person name="Rajandream M.A."/>
            <person name="Lyne M.H."/>
            <person name="Lyne R."/>
            <person name="Stewart A."/>
            <person name="Sgouros J.G."/>
            <person name="Peat N."/>
            <person name="Hayles J."/>
            <person name="Baker S.G."/>
            <person name="Basham D."/>
            <person name="Bowman S."/>
            <person name="Brooks K."/>
            <person name="Brown D."/>
            <person name="Brown S."/>
            <person name="Chillingworth T."/>
            <person name="Churcher C.M."/>
            <person name="Collins M."/>
            <person name="Connor R."/>
            <person name="Cronin A."/>
            <person name="Davis P."/>
            <person name="Feltwell T."/>
            <person name="Fraser A."/>
            <person name="Gentles S."/>
            <person name="Goble A."/>
            <person name="Hamlin N."/>
            <person name="Harris D.E."/>
            <person name="Hidalgo J."/>
            <person name="Hodgson G."/>
            <person name="Holroyd S."/>
            <person name="Hornsby T."/>
            <person name="Howarth S."/>
            <person name="Huckle E.J."/>
            <person name="Hunt S."/>
            <person name="Jagels K."/>
            <person name="James K.D."/>
            <person name="Jones L."/>
            <person name="Jones M."/>
            <person name="Leather S."/>
            <person name="McDonald S."/>
            <person name="McLean J."/>
            <person name="Mooney P."/>
            <person name="Moule S."/>
            <person name="Mungall K.L."/>
            <person name="Murphy L.D."/>
            <person name="Niblett D."/>
            <person name="Odell C."/>
            <person name="Oliver K."/>
            <person name="O'Neil S."/>
            <person name="Pearson D."/>
            <person name="Quail M.A."/>
            <person name="Rabbinowitsch E."/>
            <person name="Rutherford K.M."/>
            <person name="Rutter S."/>
            <person name="Saunders D."/>
            <person name="Seeger K."/>
            <person name="Sharp S."/>
            <person name="Skelton J."/>
            <person name="Simmonds M.N."/>
            <person name="Squares R."/>
            <person name="Squares S."/>
            <person name="Stevens K."/>
            <person name="Taylor K."/>
            <person name="Taylor R.G."/>
            <person name="Tivey A."/>
            <person name="Walsh S.V."/>
            <person name="Warren T."/>
            <person name="Whitehead S."/>
            <person name="Woodward J.R."/>
            <person name="Volckaert G."/>
            <person name="Aert R."/>
            <person name="Robben J."/>
            <person name="Grymonprez B."/>
            <person name="Weltjens I."/>
            <person name="Vanstreels E."/>
            <person name="Rieger M."/>
            <person name="Schaefer M."/>
            <person name="Mueller-Auer S."/>
            <person name="Gabel C."/>
            <person name="Fuchs M."/>
            <person name="Duesterhoeft A."/>
            <person name="Fritzc C."/>
            <person name="Holzer E."/>
            <person name="Moestl D."/>
            <person name="Hilbert H."/>
            <person name="Borzym K."/>
            <person name="Langer I."/>
            <person name="Beck A."/>
            <person name="Lehrach H."/>
            <person name="Reinhardt R."/>
            <person name="Pohl T.M."/>
            <person name="Eger P."/>
            <person name="Zimmermann W."/>
            <person name="Wedler H."/>
            <person name="Wambutt R."/>
            <person name="Purnelle B."/>
            <person name="Goffeau A."/>
            <person name="Cadieu E."/>
            <person name="Dreano S."/>
            <person name="Gloux S."/>
            <person name="Lelaure V."/>
            <person name="Mottier S."/>
            <person name="Galibert F."/>
            <person name="Aves S.J."/>
            <person name="Xiang Z."/>
            <person name="Hunt C."/>
            <person name="Moore K."/>
            <person name="Hurst S.M."/>
            <person name="Lucas M."/>
            <person name="Rochet M."/>
            <person name="Gaillardin C."/>
            <person name="Tallada V.A."/>
            <person name="Garzon A."/>
            <person name="Thode G."/>
            <person name="Daga R.R."/>
            <person name="Cruzado L."/>
            <person name="Jimenez J."/>
            <person name="Sanchez M."/>
            <person name="del Rey F."/>
            <person name="Benito J."/>
            <person name="Dominguez A."/>
            <person name="Revuelta J.L."/>
            <person name="Moreno S."/>
            <person name="Armstrong J."/>
            <person name="Forsburg S.L."/>
            <person name="Cerutti L."/>
            <person name="Lowe T."/>
            <person name="McCombie W.R."/>
            <person name="Paulsen I."/>
            <person name="Potashkin J."/>
            <person name="Shpakovski G.V."/>
            <person name="Ussery D."/>
            <person name="Barrell B.G."/>
            <person name="Nurse P."/>
        </authorList>
    </citation>
    <scope>NUCLEOTIDE SEQUENCE [LARGE SCALE GENOMIC DNA]</scope>
    <source>
        <strain>972 / ATCC 24843</strain>
    </source>
</reference>
<accession>O14209</accession>
<evidence type="ECO:0000250" key="1"/>
<evidence type="ECO:0000305" key="2"/>
<gene>
    <name type="ORF">SPAC6B12.04c</name>
</gene>
<proteinExistence type="inferred from homology"/>
<feature type="chain" id="PRO_0000123931" description="Uncharacterized aminotransferase C6B12.04c">
    <location>
        <begin position="1"/>
        <end position="421"/>
    </location>
</feature>
<feature type="modified residue" description="N6-(pyridoxal phosphate)lysine" evidence="1">
    <location>
        <position position="249"/>
    </location>
</feature>
<protein>
    <recommendedName>
        <fullName>Uncharacterized aminotransferase C6B12.04c</fullName>
        <ecNumber>2.6.1.-</ecNumber>
    </recommendedName>
</protein>
<comment type="cofactor">
    <cofactor evidence="2">
        <name>pyridoxal 5'-phosphate</name>
        <dbReference type="ChEBI" id="CHEBI:597326"/>
    </cofactor>
</comment>
<comment type="subcellular location">
    <subcellularLocation>
        <location evidence="1">Cytoplasm</location>
    </subcellularLocation>
</comment>
<comment type="similarity">
    <text evidence="2">Belongs to the class-I pyridoxal-phosphate-dependent aminotransferase family.</text>
</comment>
<keyword id="KW-0032">Aminotransferase</keyword>
<keyword id="KW-0963">Cytoplasm</keyword>
<keyword id="KW-0663">Pyridoxal phosphate</keyword>
<keyword id="KW-1185">Reference proteome</keyword>
<keyword id="KW-0808">Transferase</keyword>
<name>YDT4_SCHPO</name>
<organism>
    <name type="scientific">Schizosaccharomyces pombe (strain 972 / ATCC 24843)</name>
    <name type="common">Fission yeast</name>
    <dbReference type="NCBI Taxonomy" id="284812"/>
    <lineage>
        <taxon>Eukaryota</taxon>
        <taxon>Fungi</taxon>
        <taxon>Dikarya</taxon>
        <taxon>Ascomycota</taxon>
        <taxon>Taphrinomycotina</taxon>
        <taxon>Schizosaccharomycetes</taxon>
        <taxon>Schizosaccharomycetales</taxon>
        <taxon>Schizosaccharomycetaceae</taxon>
        <taxon>Schizosaccharomyces</taxon>
    </lineage>
</organism>
<sequence length="421" mass="47570">MAFRGIRPSNKVAASRPDVWTLVNQATAECKVPPVSLSQGFFNYNPPKFVLDAAKKSIDEVACNQYSHTRGRPSLRKALSEAYSPYFKRTLNPDTEIVVTAGANEGFFSVFAAFLNPGDEVIVMEPFFDQYISNITMNGGVPVYVPIIPPEEGSVKPVSAGAWKLDMNKLRNAITEKTKMIVINTPHNPLGKIFSEEELNEIADLVLKHNLLVVSDEVYDRLSFVPFVRLATLRPELFKHVVTVGSGGKTFGCTGWRVGWLIGDESLIKYSAAAHTRICFAVNSPCQEALAIAFGEAEKHNYYEEYKSSYKKRFEILAKAFDQLEIPYTIPDGSYYTMANFSKLKLPKDYPFPEEIANRPRDFKLCYWILKEIGVATIPPTEFYTDEDAPVAENYLRFAFCKTFETLEEAARRLQKLKDYF</sequence>
<dbReference type="EC" id="2.6.1.-"/>
<dbReference type="EMBL" id="CU329670">
    <property type="protein sequence ID" value="CAB11066.1"/>
    <property type="molecule type" value="Genomic_DNA"/>
</dbReference>
<dbReference type="PIR" id="T39011">
    <property type="entry name" value="T39011"/>
</dbReference>
<dbReference type="RefSeq" id="NP_593759.1">
    <property type="nucleotide sequence ID" value="NM_001019189.2"/>
</dbReference>
<dbReference type="SMR" id="O14209"/>
<dbReference type="BioGRID" id="279656">
    <property type="interactions" value="13"/>
</dbReference>
<dbReference type="FunCoup" id="O14209">
    <property type="interactions" value="320"/>
</dbReference>
<dbReference type="STRING" id="284812.O14209"/>
<dbReference type="PaxDb" id="4896-SPAC6B12.04c.1"/>
<dbReference type="EnsemblFungi" id="SPAC6B12.04c.1">
    <property type="protein sequence ID" value="SPAC6B12.04c.1:pep"/>
    <property type="gene ID" value="SPAC6B12.04c"/>
</dbReference>
<dbReference type="KEGG" id="spo:2543228"/>
<dbReference type="PomBase" id="SPAC6B12.04c"/>
<dbReference type="VEuPathDB" id="FungiDB:SPAC6B12.04c"/>
<dbReference type="eggNOG" id="KOG0257">
    <property type="taxonomic scope" value="Eukaryota"/>
</dbReference>
<dbReference type="HOGENOM" id="CLU_017584_4_0_1"/>
<dbReference type="InParanoid" id="O14209"/>
<dbReference type="OMA" id="PRDFKLC"/>
<dbReference type="PhylomeDB" id="O14209"/>
<dbReference type="Reactome" id="R-SPO-71240">
    <property type="pathway name" value="Tryptophan catabolism"/>
</dbReference>
<dbReference type="Reactome" id="R-SPO-8964208">
    <property type="pathway name" value="Phenylalanine metabolism"/>
</dbReference>
<dbReference type="Reactome" id="R-SPO-8964539">
    <property type="pathway name" value="Glutamate and glutamine metabolism"/>
</dbReference>
<dbReference type="PRO" id="PR:O14209"/>
<dbReference type="Proteomes" id="UP000002485">
    <property type="component" value="Chromosome I"/>
</dbReference>
<dbReference type="GO" id="GO:0005737">
    <property type="term" value="C:cytoplasm"/>
    <property type="evidence" value="ECO:0000318"/>
    <property type="project" value="GO_Central"/>
</dbReference>
<dbReference type="GO" id="GO:0005829">
    <property type="term" value="C:cytosol"/>
    <property type="evidence" value="ECO:0007005"/>
    <property type="project" value="PomBase"/>
</dbReference>
<dbReference type="GO" id="GO:0005739">
    <property type="term" value="C:mitochondrion"/>
    <property type="evidence" value="ECO:0000318"/>
    <property type="project" value="GO_Central"/>
</dbReference>
<dbReference type="GO" id="GO:0005634">
    <property type="term" value="C:nucleus"/>
    <property type="evidence" value="ECO:0007005"/>
    <property type="project" value="PomBase"/>
</dbReference>
<dbReference type="GO" id="GO:0047536">
    <property type="term" value="F:2-aminoadipate transaminase activity"/>
    <property type="evidence" value="ECO:0000266"/>
    <property type="project" value="PomBase"/>
</dbReference>
<dbReference type="GO" id="GO:0016212">
    <property type="term" value="F:kynurenine-oxoglutarate transaminase activity"/>
    <property type="evidence" value="ECO:0000318"/>
    <property type="project" value="GO_Central"/>
</dbReference>
<dbReference type="GO" id="GO:0030170">
    <property type="term" value="F:pyridoxal phosphate binding"/>
    <property type="evidence" value="ECO:0007669"/>
    <property type="project" value="InterPro"/>
</dbReference>
<dbReference type="GO" id="GO:0006520">
    <property type="term" value="P:amino acid metabolic process"/>
    <property type="evidence" value="ECO:0000305"/>
    <property type="project" value="PomBase"/>
</dbReference>
<dbReference type="GO" id="GO:0009058">
    <property type="term" value="P:biosynthetic process"/>
    <property type="evidence" value="ECO:0007669"/>
    <property type="project" value="InterPro"/>
</dbReference>
<dbReference type="CDD" id="cd00609">
    <property type="entry name" value="AAT_like"/>
    <property type="match status" value="1"/>
</dbReference>
<dbReference type="FunFam" id="3.40.640.10:FF:000024">
    <property type="entry name" value="Kynurenine--oxoglutarate transaminase 3"/>
    <property type="match status" value="1"/>
</dbReference>
<dbReference type="Gene3D" id="3.90.1150.10">
    <property type="entry name" value="Aspartate Aminotransferase, domain 1"/>
    <property type="match status" value="1"/>
</dbReference>
<dbReference type="Gene3D" id="3.40.640.10">
    <property type="entry name" value="Type I PLP-dependent aspartate aminotransferase-like (Major domain)"/>
    <property type="match status" value="1"/>
</dbReference>
<dbReference type="InterPro" id="IPR004839">
    <property type="entry name" value="Aminotransferase_I/II_large"/>
</dbReference>
<dbReference type="InterPro" id="IPR051326">
    <property type="entry name" value="Kynurenine-oxoglutarate_AT"/>
</dbReference>
<dbReference type="InterPro" id="IPR015424">
    <property type="entry name" value="PyrdxlP-dep_Trfase"/>
</dbReference>
<dbReference type="InterPro" id="IPR015421">
    <property type="entry name" value="PyrdxlP-dep_Trfase_major"/>
</dbReference>
<dbReference type="InterPro" id="IPR015422">
    <property type="entry name" value="PyrdxlP-dep_Trfase_small"/>
</dbReference>
<dbReference type="PANTHER" id="PTHR43807">
    <property type="entry name" value="FI04487P"/>
    <property type="match status" value="1"/>
</dbReference>
<dbReference type="PANTHER" id="PTHR43807:SF20">
    <property type="entry name" value="FI04487P"/>
    <property type="match status" value="1"/>
</dbReference>
<dbReference type="Pfam" id="PF00155">
    <property type="entry name" value="Aminotran_1_2"/>
    <property type="match status" value="1"/>
</dbReference>
<dbReference type="SUPFAM" id="SSF53383">
    <property type="entry name" value="PLP-dependent transferases"/>
    <property type="match status" value="1"/>
</dbReference>